<dbReference type="EMBL" id="X65634">
    <property type="protein sequence ID" value="CAA46588.1"/>
    <property type="molecule type" value="Genomic_DNA"/>
</dbReference>
<dbReference type="EMBL" id="X67594">
    <property type="protein sequence ID" value="CAA47865.1"/>
    <property type="molecule type" value="mRNA"/>
</dbReference>
<dbReference type="EMBL" id="AF153431">
    <property type="protein sequence ID" value="AAD41349.1"/>
    <property type="molecule type" value="Genomic_DNA"/>
</dbReference>
<dbReference type="EMBL" id="AF153432">
    <property type="protein sequence ID" value="AAD41350.1"/>
    <property type="molecule type" value="Genomic_DNA"/>
</dbReference>
<dbReference type="EMBL" id="AF153433">
    <property type="protein sequence ID" value="AAD41351.1"/>
    <property type="molecule type" value="Genomic_DNA"/>
</dbReference>
<dbReference type="EMBL" id="AF153434">
    <property type="protein sequence ID" value="AAD41352.1"/>
    <property type="molecule type" value="Genomic_DNA"/>
</dbReference>
<dbReference type="EMBL" id="AF153435">
    <property type="protein sequence ID" value="AAD41353.1"/>
    <property type="molecule type" value="Genomic_DNA"/>
</dbReference>
<dbReference type="EMBL" id="AF153436">
    <property type="protein sequence ID" value="AAD41354.1"/>
    <property type="molecule type" value="Genomic_DNA"/>
</dbReference>
<dbReference type="EMBL" id="AF153437">
    <property type="protein sequence ID" value="AAD41355.1"/>
    <property type="molecule type" value="Genomic_DNA"/>
</dbReference>
<dbReference type="EMBL" id="AF326275">
    <property type="protein sequence ID" value="AAK01121.1"/>
    <property type="molecule type" value="Genomic_DNA"/>
</dbReference>
<dbReference type="EMBL" id="AF263461">
    <property type="protein sequence ID" value="AAK58525.1"/>
    <property type="molecule type" value="Genomic_DNA"/>
</dbReference>
<dbReference type="EMBL" id="AY046528">
    <property type="protein sequence ID" value="AAL05887.1"/>
    <property type="molecule type" value="Genomic_DNA"/>
</dbReference>
<dbReference type="EMBL" id="AY046529">
    <property type="protein sequence ID" value="AAL05888.1"/>
    <property type="molecule type" value="Genomic_DNA"/>
</dbReference>
<dbReference type="EMBL" id="AB241548">
    <property type="protein sequence ID" value="BAE94314.1"/>
    <property type="molecule type" value="Genomic_DNA"/>
</dbReference>
<dbReference type="EMBL" id="AY363626">
    <property type="protein sequence ID" value="AAQ62976.1"/>
    <property type="molecule type" value="Genomic_DNA"/>
</dbReference>
<dbReference type="EMBL" id="AY225228">
    <property type="protein sequence ID" value="AAO67713.1"/>
    <property type="molecule type" value="Genomic_DNA"/>
</dbReference>
<dbReference type="EMBL" id="AF514787">
    <property type="protein sequence ID" value="AAM44861.1"/>
    <property type="molecule type" value="Genomic_DNA"/>
</dbReference>
<dbReference type="EMBL" id="BC007856">
    <property type="protein sequence ID" value="AAH07856.1"/>
    <property type="molecule type" value="mRNA"/>
</dbReference>
<dbReference type="EMBL" id="BC080622">
    <property type="protein sequence ID" value="AAH80622.1"/>
    <property type="molecule type" value="mRNA"/>
</dbReference>
<dbReference type="CCDS" id="CCDS56011.1"/>
<dbReference type="PIR" id="S29204">
    <property type="entry name" value="S29204"/>
</dbReference>
<dbReference type="RefSeq" id="NP_002377.4">
    <property type="nucleotide sequence ID" value="NM_002386.3"/>
</dbReference>
<dbReference type="PDB" id="7F4D">
    <property type="method" value="EM"/>
    <property type="resolution" value="3.00 A"/>
    <property type="chains" value="R=1-317"/>
</dbReference>
<dbReference type="PDB" id="7F4F">
    <property type="method" value="EM"/>
    <property type="resolution" value="2.90 A"/>
    <property type="chains" value="R=1-317"/>
</dbReference>
<dbReference type="PDB" id="7F4H">
    <property type="method" value="EM"/>
    <property type="resolution" value="2.70 A"/>
    <property type="chains" value="R=1-317"/>
</dbReference>
<dbReference type="PDB" id="7F4I">
    <property type="method" value="EM"/>
    <property type="resolution" value="3.10 A"/>
    <property type="chains" value="R=1-317"/>
</dbReference>
<dbReference type="PDBsum" id="7F4D"/>
<dbReference type="PDBsum" id="7F4F"/>
<dbReference type="PDBsum" id="7F4H"/>
<dbReference type="PDBsum" id="7F4I"/>
<dbReference type="EMDB" id="EMD-31448"/>
<dbReference type="EMDB" id="EMD-31449"/>
<dbReference type="EMDB" id="EMD-31452"/>
<dbReference type="EMDB" id="EMD-31453"/>
<dbReference type="SMR" id="Q01726"/>
<dbReference type="BioGRID" id="110327">
    <property type="interactions" value="18"/>
</dbReference>
<dbReference type="CORUM" id="Q01726"/>
<dbReference type="DIP" id="DIP-48789N"/>
<dbReference type="FunCoup" id="Q01726">
    <property type="interactions" value="963"/>
</dbReference>
<dbReference type="IntAct" id="Q01726">
    <property type="interactions" value="5"/>
</dbReference>
<dbReference type="STRING" id="9606.ENSP00000451605"/>
<dbReference type="BindingDB" id="Q01726"/>
<dbReference type="ChEMBL" id="CHEMBL3795"/>
<dbReference type="DrugBank" id="DB04931">
    <property type="generic name" value="Afamelanotide"/>
</dbReference>
<dbReference type="DrugBank" id="DB11653">
    <property type="generic name" value="Bremelanotide"/>
</dbReference>
<dbReference type="DrugBank" id="DB05479">
    <property type="generic name" value="CZEN 002"/>
</dbReference>
<dbReference type="DrugBank" id="DB18007">
    <property type="generic name" value="Dersimelagon"/>
</dbReference>
<dbReference type="DrugCentral" id="Q01726"/>
<dbReference type="GuidetoPHARMACOLOGY" id="282"/>
<dbReference type="GlyCosmos" id="Q01726">
    <property type="glycosylation" value="1 site, No reported glycans"/>
</dbReference>
<dbReference type="GlyGen" id="Q01726">
    <property type="glycosylation" value="3 sites, 1 O-linked glycan (1 site)"/>
</dbReference>
<dbReference type="iPTMnet" id="Q01726"/>
<dbReference type="PhosphoSitePlus" id="Q01726"/>
<dbReference type="SwissPalm" id="Q01726"/>
<dbReference type="BioMuta" id="MC1R"/>
<dbReference type="DMDM" id="12644376"/>
<dbReference type="MassIVE" id="Q01726"/>
<dbReference type="PaxDb" id="9606-ENSP00000451605"/>
<dbReference type="PeptideAtlas" id="Q01726"/>
<dbReference type="Antibodypedia" id="54873">
    <property type="antibodies" value="367 antibodies from 34 providers"/>
</dbReference>
<dbReference type="DNASU" id="4157"/>
<dbReference type="Ensembl" id="ENST00000555147.2">
    <property type="protein sequence ID" value="ENSP00000451605.1"/>
    <property type="gene ID" value="ENSG00000258839.4"/>
</dbReference>
<dbReference type="Ensembl" id="ENST00000639847.1">
    <property type="protein sequence ID" value="ENSP00000492011.1"/>
    <property type="gene ID" value="ENSG00000258839.4"/>
</dbReference>
<dbReference type="GeneID" id="4157"/>
<dbReference type="KEGG" id="hsa:4157"/>
<dbReference type="MANE-Select" id="ENST00000555147.2">
    <property type="protein sequence ID" value="ENSP00000451605.1"/>
    <property type="RefSeq nucleotide sequence ID" value="NM_002386.4"/>
    <property type="RefSeq protein sequence ID" value="NP_002377.4"/>
</dbReference>
<dbReference type="AGR" id="HGNC:6929"/>
<dbReference type="CTD" id="4157"/>
<dbReference type="DisGeNET" id="4157"/>
<dbReference type="GeneCards" id="MC1R"/>
<dbReference type="HGNC" id="HGNC:6929">
    <property type="gene designation" value="MC1R"/>
</dbReference>
<dbReference type="HPA" id="ENSG00000258839">
    <property type="expression patterns" value="Tissue enhanced (pituitary gland, testis)"/>
</dbReference>
<dbReference type="MalaCards" id="MC1R"/>
<dbReference type="MIM" id="155555">
    <property type="type" value="gene"/>
</dbReference>
<dbReference type="MIM" id="266300">
    <property type="type" value="phenotype"/>
</dbReference>
<dbReference type="MIM" id="613098">
    <property type="type" value="phenotype"/>
</dbReference>
<dbReference type="MIM" id="613099">
    <property type="type" value="phenotype"/>
</dbReference>
<dbReference type="neXtProt" id="NX_Q01726"/>
<dbReference type="OpenTargets" id="ENSG00000258839"/>
<dbReference type="Orphanet" id="618">
    <property type="disease" value="Familial melanoma"/>
</dbReference>
<dbReference type="Orphanet" id="79432">
    <property type="disease" value="Oculocutaneous albinism type 2"/>
</dbReference>
<dbReference type="PharmGKB" id="PA30673"/>
<dbReference type="VEuPathDB" id="HostDB:ENSG00000258839"/>
<dbReference type="eggNOG" id="KOG3656">
    <property type="taxonomic scope" value="Eukaryota"/>
</dbReference>
<dbReference type="GeneTree" id="ENSGT01120000271819"/>
<dbReference type="HOGENOM" id="CLU_009579_13_0_1"/>
<dbReference type="InParanoid" id="Q01726"/>
<dbReference type="OrthoDB" id="5970330at2759"/>
<dbReference type="PAN-GO" id="Q01726">
    <property type="GO annotations" value="5 GO annotations based on evolutionary models"/>
</dbReference>
<dbReference type="TreeFam" id="TF332646"/>
<dbReference type="PathwayCommons" id="Q01726"/>
<dbReference type="Reactome" id="R-HSA-375276">
    <property type="pathway name" value="Peptide ligand-binding receptors"/>
</dbReference>
<dbReference type="Reactome" id="R-HSA-418555">
    <property type="pathway name" value="G alpha (s) signalling events"/>
</dbReference>
<dbReference type="Reactome" id="R-HSA-9856649">
    <property type="pathway name" value="Transcriptional and post-translational regulation of MITF-M expression and activity"/>
</dbReference>
<dbReference type="SignaLink" id="Q01726"/>
<dbReference type="SIGNOR" id="Q01726"/>
<dbReference type="BioGRID-ORCS" id="4157">
    <property type="hits" value="12 hits in 1146 CRISPR screens"/>
</dbReference>
<dbReference type="ChiTaRS" id="MC1R">
    <property type="organism name" value="human"/>
</dbReference>
<dbReference type="GeneWiki" id="Melanocortin_1_receptor"/>
<dbReference type="GenomeRNAi" id="4157"/>
<dbReference type="Pharos" id="Q01726">
    <property type="development level" value="Tclin"/>
</dbReference>
<dbReference type="PRO" id="PR:Q01726"/>
<dbReference type="Proteomes" id="UP000005640">
    <property type="component" value="Chromosome 16"/>
</dbReference>
<dbReference type="RNAct" id="Q01726">
    <property type="molecule type" value="protein"/>
</dbReference>
<dbReference type="Bgee" id="ENSG00000258839">
    <property type="expression patterns" value="Expressed in granulocyte and 115 other cell types or tissues"/>
</dbReference>
<dbReference type="ExpressionAtlas" id="Q01726">
    <property type="expression patterns" value="baseline and differential"/>
</dbReference>
<dbReference type="GO" id="GO:0005737">
    <property type="term" value="C:cytoplasm"/>
    <property type="evidence" value="ECO:0000318"/>
    <property type="project" value="GO_Central"/>
</dbReference>
<dbReference type="GO" id="GO:0005886">
    <property type="term" value="C:plasma membrane"/>
    <property type="evidence" value="ECO:0000314"/>
    <property type="project" value="UniProtKB"/>
</dbReference>
<dbReference type="GO" id="GO:0008528">
    <property type="term" value="F:G protein-coupled peptide receptor activity"/>
    <property type="evidence" value="ECO:0000304"/>
    <property type="project" value="BHF-UCL"/>
</dbReference>
<dbReference type="GO" id="GO:0042562">
    <property type="term" value="F:hormone binding"/>
    <property type="evidence" value="ECO:0007669"/>
    <property type="project" value="Ensembl"/>
</dbReference>
<dbReference type="GO" id="GO:0004977">
    <property type="term" value="F:melanocortin receptor activity"/>
    <property type="evidence" value="ECO:0000304"/>
    <property type="project" value="ProtInc"/>
</dbReference>
<dbReference type="GO" id="GO:0004980">
    <property type="term" value="F:melanocyte-stimulating hormone receptor activity"/>
    <property type="evidence" value="ECO:0000353"/>
    <property type="project" value="BHF-UCL"/>
</dbReference>
<dbReference type="GO" id="GO:0031625">
    <property type="term" value="F:ubiquitin protein ligase binding"/>
    <property type="evidence" value="ECO:0000353"/>
    <property type="project" value="UniProtKB"/>
</dbReference>
<dbReference type="GO" id="GO:0007189">
    <property type="term" value="P:adenylate cyclase-activating G protein-coupled receptor signaling pathway"/>
    <property type="evidence" value="ECO:0000314"/>
    <property type="project" value="BHF-UCL"/>
</dbReference>
<dbReference type="GO" id="GO:0007187">
    <property type="term" value="P:G protein-coupled receptor signaling pathway, coupled to cyclic nucleotide second messenger"/>
    <property type="evidence" value="ECO:0000304"/>
    <property type="project" value="ProtInc"/>
</dbReference>
<dbReference type="GO" id="GO:0035556">
    <property type="term" value="P:intracellular signal transduction"/>
    <property type="evidence" value="ECO:0000250"/>
    <property type="project" value="BHF-UCL"/>
</dbReference>
<dbReference type="GO" id="GO:0042438">
    <property type="term" value="P:melanin biosynthetic process"/>
    <property type="evidence" value="ECO:0007669"/>
    <property type="project" value="Ensembl"/>
</dbReference>
<dbReference type="GO" id="GO:0032720">
    <property type="term" value="P:negative regulation of tumor necrosis factor production"/>
    <property type="evidence" value="ECO:0000315"/>
    <property type="project" value="BHF-UCL"/>
</dbReference>
<dbReference type="GO" id="GO:0007200">
    <property type="term" value="P:phospholipase C-activating G protein-coupled receptor signaling pathway"/>
    <property type="evidence" value="ECO:0000250"/>
    <property type="project" value="BHF-UCL"/>
</dbReference>
<dbReference type="GO" id="GO:0043473">
    <property type="term" value="P:pigmentation"/>
    <property type="evidence" value="ECO:0000304"/>
    <property type="project" value="BHF-UCL"/>
</dbReference>
<dbReference type="GO" id="GO:0141163">
    <property type="term" value="P:positive regulation of cAMP/PKA signal transduction"/>
    <property type="evidence" value="ECO:0000250"/>
    <property type="project" value="BHF-UCL"/>
</dbReference>
<dbReference type="GO" id="GO:2000253">
    <property type="term" value="P:positive regulation of feeding behavior"/>
    <property type="evidence" value="ECO:0007669"/>
    <property type="project" value="Ensembl"/>
</dbReference>
<dbReference type="GO" id="GO:0045944">
    <property type="term" value="P:positive regulation of transcription by RNA polymerase II"/>
    <property type="evidence" value="ECO:0000250"/>
    <property type="project" value="BHF-UCL"/>
</dbReference>
<dbReference type="GO" id="GO:0019222">
    <property type="term" value="P:regulation of metabolic process"/>
    <property type="evidence" value="ECO:0000318"/>
    <property type="project" value="GO_Central"/>
</dbReference>
<dbReference type="GO" id="GO:0019233">
    <property type="term" value="P:sensory perception of pain"/>
    <property type="evidence" value="ECO:0007669"/>
    <property type="project" value="Ensembl"/>
</dbReference>
<dbReference type="GO" id="GO:0009650">
    <property type="term" value="P:UV protection"/>
    <property type="evidence" value="ECO:0000304"/>
    <property type="project" value="ProtInc"/>
</dbReference>
<dbReference type="GO" id="GO:0070914">
    <property type="term" value="P:UV-damage excision repair"/>
    <property type="evidence" value="ECO:0000314"/>
    <property type="project" value="BHF-UCL"/>
</dbReference>
<dbReference type="CDD" id="cd15351">
    <property type="entry name" value="7tmA_MC1R"/>
    <property type="match status" value="1"/>
</dbReference>
<dbReference type="FunFam" id="1.20.1070.10:FF:000211">
    <property type="entry name" value="Melanocyte-stimulating hormone receptor"/>
    <property type="match status" value="1"/>
</dbReference>
<dbReference type="Gene3D" id="1.20.1070.10">
    <property type="entry name" value="Rhodopsin 7-helix transmembrane proteins"/>
    <property type="match status" value="1"/>
</dbReference>
<dbReference type="InterPro" id="IPR000276">
    <property type="entry name" value="GPCR_Rhodpsn"/>
</dbReference>
<dbReference type="InterPro" id="IPR017452">
    <property type="entry name" value="GPCR_Rhodpsn_7TM"/>
</dbReference>
<dbReference type="InterPro" id="IPR001671">
    <property type="entry name" value="Melcrt_ACTH_rcpt"/>
</dbReference>
<dbReference type="InterPro" id="IPR000761">
    <property type="entry name" value="MSH_rcpt"/>
</dbReference>
<dbReference type="PANTHER" id="PTHR22750">
    <property type="entry name" value="G-PROTEIN COUPLED RECEPTOR"/>
    <property type="match status" value="1"/>
</dbReference>
<dbReference type="Pfam" id="PF00001">
    <property type="entry name" value="7tm_1"/>
    <property type="match status" value="2"/>
</dbReference>
<dbReference type="PRINTS" id="PR00237">
    <property type="entry name" value="GPCRRHODOPSN"/>
</dbReference>
<dbReference type="PRINTS" id="PR00534">
    <property type="entry name" value="MCRFAMILY"/>
</dbReference>
<dbReference type="PRINTS" id="PR00536">
    <property type="entry name" value="MELNOCYTESHR"/>
</dbReference>
<dbReference type="SMART" id="SM01381">
    <property type="entry name" value="7TM_GPCR_Srsx"/>
    <property type="match status" value="1"/>
</dbReference>
<dbReference type="SUPFAM" id="SSF81321">
    <property type="entry name" value="Family A G protein-coupled receptor-like"/>
    <property type="match status" value="1"/>
</dbReference>
<dbReference type="PROSITE" id="PS00237">
    <property type="entry name" value="G_PROTEIN_RECEP_F1_1"/>
    <property type="match status" value="1"/>
</dbReference>
<dbReference type="PROSITE" id="PS50262">
    <property type="entry name" value="G_PROTEIN_RECEP_F1_2"/>
    <property type="match status" value="1"/>
</dbReference>
<name>MSHR_HUMAN</name>
<sequence>MAVQGSQRRLLGSLNSTPTAIPQLGLAANQTGARCLEVSISDGLFLSLGLVSLVENALVVATIAKNRNLHSPMYCFICCLALSDLLVSGSNVLETAVILLLEAGALVARAAVLQQLDNVIDVITCSSMLSSLCFLGAIAVDRYISIFYALRYHSIVTLPRARRAVAAIWVASVVFSTLFIAYYDHVAVLLCLVVFFLAMLVLMAVLYVHMLARACQHAQGIARLHKRQRPVHQGFGLKGAVTLTILLGIFFLCWGPFFLHLTLIVLCPEHPTCGCIFKNFNLFLALIICNAIIDPLIYAFHSQELRRTLKEVLTCSW</sequence>
<accession>Q01726</accession>
<accession>Q66K38</accession>
<accession>Q6UR93</accession>
<accession>Q8WWX6</accession>
<accession>Q8WWX7</accession>
<accession>Q96I33</accession>
<accession>Q96RU4</accession>
<accession>Q9UBF7</accession>
<accession>Q9UN58</accession>
<accession>Q9UN59</accession>
<accession>Q9UN60</accession>
<accession>Q9UN61</accession>
<accession>Q9UN62</accession>
<feature type="chain" id="PRO_0000069818" description="Melanocyte-stimulating hormone receptor">
    <location>
        <begin position="1"/>
        <end position="317"/>
    </location>
</feature>
<feature type="topological domain" description="Extracellular" evidence="1">
    <location>
        <begin position="1"/>
        <end position="37"/>
    </location>
</feature>
<feature type="transmembrane region" description="Helical; Name=1" evidence="1">
    <location>
        <begin position="38"/>
        <end position="63"/>
    </location>
</feature>
<feature type="topological domain" description="Cytoplasmic" evidence="1">
    <location>
        <begin position="64"/>
        <end position="72"/>
    </location>
</feature>
<feature type="transmembrane region" description="Helical; Name=2" evidence="1">
    <location>
        <begin position="73"/>
        <end position="93"/>
    </location>
</feature>
<feature type="topological domain" description="Extracellular" evidence="1">
    <location>
        <begin position="94"/>
        <end position="118"/>
    </location>
</feature>
<feature type="transmembrane region" description="Helical; Name=3" evidence="1">
    <location>
        <begin position="119"/>
        <end position="140"/>
    </location>
</feature>
<feature type="topological domain" description="Cytoplasmic" evidence="1">
    <location>
        <begin position="141"/>
        <end position="163"/>
    </location>
</feature>
<feature type="transmembrane region" description="Helical; Name=4" evidence="1">
    <location>
        <begin position="164"/>
        <end position="183"/>
    </location>
</feature>
<feature type="topological domain" description="Extracellular" evidence="1">
    <location>
        <begin position="184"/>
        <end position="191"/>
    </location>
</feature>
<feature type="transmembrane region" description="Helical; Name=5" evidence="1">
    <location>
        <begin position="192"/>
        <end position="211"/>
    </location>
</feature>
<feature type="topological domain" description="Cytoplasmic" evidence="1">
    <location>
        <begin position="212"/>
        <end position="240"/>
    </location>
</feature>
<feature type="transmembrane region" description="Helical; Name=6" evidence="1">
    <location>
        <begin position="241"/>
        <end position="266"/>
    </location>
</feature>
<feature type="topological domain" description="Extracellular" evidence="1">
    <location>
        <begin position="267"/>
        <end position="279"/>
    </location>
</feature>
<feature type="transmembrane region" description="Helical; Name=7" evidence="1">
    <location>
        <begin position="280"/>
        <end position="300"/>
    </location>
</feature>
<feature type="topological domain" description="Cytoplasmic" evidence="1">
    <location>
        <begin position="301"/>
        <end position="317"/>
    </location>
</feature>
<feature type="lipid moiety-binding region" description="S-palmitoyl cysteine" evidence="1">
    <location>
        <position position="315"/>
    </location>
</feature>
<feature type="glycosylation site" description="N-linked (GlcNAc...) asparagine" evidence="1">
    <location>
        <position position="29"/>
    </location>
</feature>
<feature type="sequence variant" id="VAR_059018" description="In CMM5; moderate decrease in coupling to the cAMP pathway; reduced cell surface expression as a consequence of retention in the endoplasmic reticulum; dbSNP:rs200050206." evidence="17">
    <original>V</original>
    <variation>M</variation>
    <location>
        <position position="38"/>
    </location>
</feature>
<feature type="sequence variant" id="VAR_013611" description="Correlated with fair hair and light skin; partial loss-of-function; dbSNP:rs748138541." evidence="6">
    <original>I</original>
    <variation>T</variation>
    <location>
        <position position="40"/>
    </location>
</feature>
<feature type="sequence variant" id="VAR_059019" description="In CMM5; complete absence of functional coupling to the cAMP pathway; reduced cell surface expression as a consequence of retention in the endoplasmic reticulum." evidence="14 17">
    <original>S</original>
    <variation>F</variation>
    <location>
        <position position="41"/>
    </location>
</feature>
<feature type="sequence variant" id="VAR_059020" description="In CMM5; moderate decrease in coupling to the cAMP pathway; reduced cell surface expression as a consequence of retention in the endoplasmic reticulum; dbSNP:rs766080391." evidence="17">
    <original>V</original>
    <variation>A</variation>
    <location>
        <position position="51"/>
    </location>
</feature>
<feature type="sequence variant" id="VAR_013612" description="Probable risk factor for developing melanoma; unable to stimulate cAMP production as strongly as the wild type receptor in response to alpha-melanocyte-stimulating hormone stimulation; dbSNP:rs1805005." evidence="4 14 16 24 27">
    <original>V</original>
    <variation>L</variation>
    <location>
        <position position="60"/>
    </location>
</feature>
<feature type="sequence variant" id="VAR_009522" description="Shows a moderate and not significant decrease of cAMP production to NDP-MSH stimulation; shows a decreased responses to low concentrations of NDP-MSH stimulation; dbSNP:rs34090186." evidence="3 13">
    <original>R</original>
    <variation>Q</variation>
    <location>
        <position position="67"/>
    </location>
</feature>
<feature type="sequence variant" id="VAR_003507" description="Probable risk factor for developing melanoma; reduced expression at the cell surface; dbSNP:rs1805006." evidence="3 12 22 23">
    <original>D</original>
    <variation>E</variation>
    <location>
        <position position="84"/>
    </location>
</feature>
<feature type="sequence variant" id="VAR_042654" description="In dbSNP:rs34540312.">
    <original>G</original>
    <variation>R</variation>
    <location>
        <position position="89"/>
    </location>
</feature>
<feature type="sequence variant" id="VAR_003508" description="Probable risk factor for developing melanoma; predominantly found in type I skin; shows a moderate and not significant decreased of cAMP production to NDP-MSH stimulation; dbSNP:rs2228479." evidence="3 13 14 16 23 24 27">
    <original>V</original>
    <variation>M</variation>
    <location>
        <position position="92"/>
    </location>
</feature>
<feature type="sequence variant" id="VAR_059021" description="Loss-of-function mutation abolishing agonist binding." evidence="7">
    <original>L</original>
    <variation>R</variation>
    <location>
        <position position="93"/>
    </location>
</feature>
<feature type="sequence variant" id="VAR_042655" description="In dbSNP:rs34158934.">
    <original>T</original>
    <variation>M</variation>
    <location>
        <position position="95"/>
    </location>
</feature>
<feature type="sequence variant" id="VAR_042656" description="In dbSNP:rs2229617.">
    <original>G</original>
    <variation>S</variation>
    <location>
        <position position="104"/>
    </location>
</feature>
<feature type="sequence variant" id="VAR_042657" description="Shows a moderate and not significant decrease of cAMP production to NDP-MSH stimulation; shows decreased responses to low concentrations of NDP-MSH stimulation; dbSNP:rs33932559." evidence="13">
    <original>I</original>
    <variation>T</variation>
    <location>
        <position position="120"/>
    </location>
</feature>
<feature type="sequence variant" id="VAR_013613" description="Correlated with fair hair and light skin; partial loss-of-function; dbSNP:rs201192930." evidence="6">
    <original>V</original>
    <variation>M</variation>
    <location>
        <position position="122"/>
    </location>
</feature>
<feature type="sequence variant" id="VAR_059022" description="In CMM5; complete absence of functional coupling to the cAMP pathway; trafficked to the cell surface but unable to bind agonist efficiently; dbSNP:rs374235260." evidence="14 17">
    <original>M</original>
    <variation>T</variation>
    <location>
        <position position="128"/>
    </location>
</feature>
<feature type="sequence variant" id="VAR_059023" description="In dbSNP:rs11547464." evidence="4 7">
    <original>R</original>
    <variation>H</variation>
    <location>
        <position position="142"/>
    </location>
</feature>
<feature type="sequence variant" id="VAR_042658" description="Probable risk factor for UV-induced skin damage; unresponsive to NDP-MSH stimulation." evidence="13">
    <location>
        <position position="147"/>
    </location>
</feature>
<feature type="sequence variant" id="VAR_008522" description="Correlated with red hair and light skin of type I; binds to alpha-MSH but cannot be stimulated to produce cAMP; reduced expression at the cell surface; dbSNP:rs1805007." evidence="3 4 7 12 13 15 24 25 27">
    <original>R</original>
    <variation>C</variation>
    <location>
        <position position="151"/>
    </location>
</feature>
<feature type="sequence variant" id="VAR_013614" description="Probable risk factor for developing melanoma; reduced expression at the cell surface; dbSNP:rs1110400." evidence="11 12 14 27">
    <original>I</original>
    <variation>T</variation>
    <location>
        <position position="155"/>
    </location>
</feature>
<feature type="sequence variant" id="VAR_013615" description="In dbSNP:rs3212365." evidence="27">
    <original>V</original>
    <variation>L</variation>
    <location>
        <position position="156"/>
    </location>
</feature>
<feature type="sequence variant" id="VAR_042659" description="Probable risk factor for UV-induced skin damage; shows a dramatically decreased cAMP production to NDP-MSH stimulation; dbSNP:rs104894524." evidence="13">
    <original>T</original>
    <variation>I</variation>
    <location>
        <position position="157"/>
    </location>
</feature>
<feature type="sequence variant" id="VAR_042660" description="Probable risk factor for UV-induced skin damage; shows a strong decreased cAMP production to NDP-MSH stimulation; dbSNP:rs104894523." evidence="13">
    <original>P</original>
    <variation>T</variation>
    <location>
        <position position="159"/>
    </location>
</feature>
<feature type="sequence variant" id="VAR_008523" description="Probable risk factor for developing melanoma; unable to stimulate cAMP production as strongly as the wild type receptor in response to alpha-melanocyte-stimulating hormone stimulation; reduced expression at the cell surface.; dbSNP:rs1805008." evidence="4 12 14 24 26 27">
    <original>R</original>
    <variation>W</variation>
    <location>
        <position position="160"/>
    </location>
</feature>
<feature type="sequence variant" id="VAR_013632" evidence="5">
    <original>R</original>
    <variation>P</variation>
    <location>
        <position position="162"/>
    </location>
</feature>
<feature type="sequence variant" id="VAR_009523" description="Probable risk factor for developing melanoma; shows a moderate and not significant decrease of cAMP production to NDP-MSH stimulation; shows a not significant decrease in cAMP production at any concentrations of NDP-MSH stimulation; dbSNP:rs885479." evidence="3 13 14 27">
    <original>R</original>
    <variation>Q</variation>
    <location>
        <position position="163"/>
    </location>
</feature>
<feature type="sequence variant" id="VAR_042661" description="Shows a moderate and not significant decrease of cAMP production to NDP-MSH stimulation; shows a not significant decrease in cAMP production at any concentrations of NDP-MSH stimulation; dbSNP:rs35040147." evidence="13">
    <original>A</original>
    <variation>G</variation>
    <location>
        <position position="166"/>
    </location>
</feature>
<feature type="sequence variant" id="VAR_042662" description="In dbSNP:rs35784916.">
    <original>A</original>
    <variation>S</variation>
    <location>
        <position position="171"/>
    </location>
</feature>
<feature type="sequence variant" id="VAR_013616" description="In dbSNP:rs3212366." evidence="27">
    <original>F</original>
    <variation>L</variation>
    <location>
        <position position="196"/>
    </location>
</feature>
<feature type="sequence variant" id="VAR_059024" description="Does not affect receptor surface expression, agonist binding and agonist-induced signaling; dbSNP:rs141177570." evidence="14 17">
    <original>N</original>
    <variation>S</variation>
    <location>
        <position position="281"/>
    </location>
</feature>
<feature type="sequence variant" id="VAR_059025" description="In CMM5; complete absence of functional coupling to the cAMP pathway; trafficked to the cell surface but unable to bind agonist efficiently; dbSNP:rs369542041." evidence="17">
    <original>C</original>
    <variation>R</variation>
    <location>
        <position position="289"/>
    </location>
</feature>
<feature type="sequence variant" id="VAR_008524" description="Probable risk factor for developing melanoma; unable to stimulate cAMP production as strongly as the wild type receptor in response to alpha-melanocyte-stimulating hormone stimulation; dbSNP:rs1805009." evidence="4 14 20 24">
    <original>D</original>
    <variation>H</variation>
    <location>
        <position position="294"/>
    </location>
</feature>
<feature type="mutagenesis site" description="Only minor effect on internalization rate and protein half-life; when associated with R-226; R-238 and R-310." evidence="18">
    <original>K</original>
    <variation>R</variation>
    <location>
        <position position="65"/>
    </location>
</feature>
<feature type="mutagenesis site" description="Only minor effect on internalization rate and protein half-life; when associated with R-65; R-238 and R-310." evidence="18">
    <original>K</original>
    <variation>R</variation>
    <location>
        <position position="226"/>
    </location>
</feature>
<feature type="mutagenesis site" description="Only minor effect on internalization rate and protein half-life; when associated with R-65; R-226 and R-310." evidence="18">
    <original>K</original>
    <variation>R</variation>
    <location>
        <position position="238"/>
    </location>
</feature>
<feature type="mutagenesis site" description="Only minor effect on internalization rate and protein half-life; when associated with R-65; R-226 and R-238." evidence="18">
    <original>K</original>
    <variation>R</variation>
    <location>
        <position position="310"/>
    </location>
</feature>
<feature type="sequence conflict" description="In Ref. 1 and 2." evidence="28" ref="1 2">
    <original>S</original>
    <variation>T</variation>
    <location>
        <position position="90"/>
    </location>
</feature>
<feature type="sequence conflict" description="In Ref. 3." evidence="28" ref="3">
    <original>A</original>
    <variation>R</variation>
    <location>
        <position position="164"/>
    </location>
</feature>
<feature type="sequence conflict" description="In Ref. 10; AAQ62976." evidence="28" ref="10">
    <original>A</original>
    <variation>T</variation>
    <location>
        <position position="222"/>
    </location>
</feature>
<feature type="helix" evidence="30">
    <location>
        <begin position="42"/>
        <end position="65"/>
    </location>
</feature>
<feature type="helix" evidence="30">
    <location>
        <begin position="67"/>
        <end position="69"/>
    </location>
</feature>
<feature type="helix" evidence="30">
    <location>
        <begin position="72"/>
        <end position="102"/>
    </location>
</feature>
<feature type="strand" evidence="31">
    <location>
        <begin position="104"/>
        <end position="106"/>
    </location>
</feature>
<feature type="helix" evidence="30">
    <location>
        <begin position="110"/>
        <end position="147"/>
    </location>
</feature>
<feature type="helix" evidence="30">
    <location>
        <begin position="149"/>
        <end position="151"/>
    </location>
</feature>
<feature type="helix" evidence="30">
    <location>
        <begin position="152"/>
        <end position="155"/>
    </location>
</feature>
<feature type="helix" evidence="30">
    <location>
        <begin position="158"/>
        <end position="181"/>
    </location>
</feature>
<feature type="turn" evidence="29">
    <location>
        <begin position="182"/>
        <end position="184"/>
    </location>
</feature>
<feature type="helix" evidence="30">
    <location>
        <begin position="186"/>
        <end position="225"/>
    </location>
</feature>
<feature type="helix" evidence="30">
    <location>
        <begin position="238"/>
        <end position="266"/>
    </location>
</feature>
<feature type="helix" evidence="30">
    <location>
        <begin position="271"/>
        <end position="277"/>
    </location>
</feature>
<feature type="helix" evidence="30">
    <location>
        <begin position="280"/>
        <end position="298"/>
    </location>
</feature>
<feature type="turn" evidence="30">
    <location>
        <begin position="299"/>
        <end position="301"/>
    </location>
</feature>
<feature type="helix" evidence="30">
    <location>
        <begin position="303"/>
        <end position="310"/>
    </location>
</feature>
<protein>
    <recommendedName>
        <fullName>Melanocyte-stimulating hormone receptor</fullName>
        <shortName>MSH-R</shortName>
    </recommendedName>
    <alternativeName>
        <fullName>Melanocortin receptor 1</fullName>
        <shortName>MC1-R</shortName>
    </alternativeName>
</protein>
<organism>
    <name type="scientific">Homo sapiens</name>
    <name type="common">Human</name>
    <dbReference type="NCBI Taxonomy" id="9606"/>
    <lineage>
        <taxon>Eukaryota</taxon>
        <taxon>Metazoa</taxon>
        <taxon>Chordata</taxon>
        <taxon>Craniata</taxon>
        <taxon>Vertebrata</taxon>
        <taxon>Euteleostomi</taxon>
        <taxon>Mammalia</taxon>
        <taxon>Eutheria</taxon>
        <taxon>Euarchontoglires</taxon>
        <taxon>Primates</taxon>
        <taxon>Haplorrhini</taxon>
        <taxon>Catarrhini</taxon>
        <taxon>Hominidae</taxon>
        <taxon>Homo</taxon>
    </lineage>
</organism>
<evidence type="ECO:0000255" key="1"/>
<evidence type="ECO:0000255" key="2">
    <source>
        <dbReference type="PROSITE-ProRule" id="PRU00521"/>
    </source>
</evidence>
<evidence type="ECO:0000269" key="3">
    <source>
    </source>
</evidence>
<evidence type="ECO:0000269" key="4">
    <source>
    </source>
</evidence>
<evidence type="ECO:0000269" key="5">
    <source>
    </source>
</evidence>
<evidence type="ECO:0000269" key="6">
    <source>
    </source>
</evidence>
<evidence type="ECO:0000269" key="7">
    <source>
    </source>
</evidence>
<evidence type="ECO:0000269" key="8">
    <source>
    </source>
</evidence>
<evidence type="ECO:0000269" key="9">
    <source>
    </source>
</evidence>
<evidence type="ECO:0000269" key="10">
    <source>
    </source>
</evidence>
<evidence type="ECO:0000269" key="11">
    <source>
    </source>
</evidence>
<evidence type="ECO:0000269" key="12">
    <source>
    </source>
</evidence>
<evidence type="ECO:0000269" key="13">
    <source>
    </source>
</evidence>
<evidence type="ECO:0000269" key="14">
    <source>
    </source>
</evidence>
<evidence type="ECO:0000269" key="15">
    <source>
    </source>
</evidence>
<evidence type="ECO:0000269" key="16">
    <source>
    </source>
</evidence>
<evidence type="ECO:0000269" key="17">
    <source>
    </source>
</evidence>
<evidence type="ECO:0000269" key="18">
    <source>
    </source>
</evidence>
<evidence type="ECO:0000269" key="19">
    <source>
    </source>
</evidence>
<evidence type="ECO:0000269" key="20">
    <source>
    </source>
</evidence>
<evidence type="ECO:0000269" key="21">
    <source>
    </source>
</evidence>
<evidence type="ECO:0000269" key="22">
    <source>
    </source>
</evidence>
<evidence type="ECO:0000269" key="23">
    <source>
    </source>
</evidence>
<evidence type="ECO:0000269" key="24">
    <source>
    </source>
</evidence>
<evidence type="ECO:0000269" key="25">
    <source>
    </source>
</evidence>
<evidence type="ECO:0000269" key="26">
    <source>
    </source>
</evidence>
<evidence type="ECO:0000269" key="27">
    <source ref="12"/>
</evidence>
<evidence type="ECO:0000305" key="28"/>
<evidence type="ECO:0007829" key="29">
    <source>
        <dbReference type="PDB" id="7F4F"/>
    </source>
</evidence>
<evidence type="ECO:0007829" key="30">
    <source>
        <dbReference type="PDB" id="7F4H"/>
    </source>
</evidence>
<evidence type="ECO:0007829" key="31">
    <source>
        <dbReference type="PDB" id="7F4I"/>
    </source>
</evidence>
<reference key="1">
    <citation type="journal article" date="1992" name="Science">
        <title>The cloning of a family of genes that encode the melanocortin receptors.</title>
        <authorList>
            <person name="Mountjoy K.G."/>
            <person name="Robbins L.S."/>
            <person name="Mortrud M."/>
            <person name="Cone R.D."/>
        </authorList>
    </citation>
    <scope>NUCLEOTIDE SEQUENCE [GENOMIC DNA]</scope>
    <scope>FUNCTION</scope>
    <scope>TISSUE SPECIFICITY</scope>
    <source>
        <tissue>Skin</tissue>
    </source>
</reference>
<reference key="2">
    <citation type="journal article" date="1993" name="J. Biol. Chem.">
        <title>Molecular cloning of a novel melanocortin receptor.</title>
        <authorList>
            <person name="Gantz I."/>
            <person name="Konda Y."/>
            <person name="Tashiro T."/>
            <person name="Shimoto Y."/>
            <person name="Miwa H."/>
            <person name="Munzert G."/>
            <person name="Watson S.J."/>
            <person name="Delvalle J."/>
            <person name="Yamada T."/>
        </authorList>
    </citation>
    <scope>NUCLEOTIDE SEQUENCE [GENOMIC DNA]</scope>
    <scope>FUNCTION</scope>
</reference>
<reference key="3">
    <citation type="journal article" date="1992" name="FEBS Lett.">
        <title>Molecular cloning and expression of the human melanocyte stimulating hormone receptor cDNA.</title>
        <authorList>
            <person name="Chhajlani V."/>
            <person name="Wikberg J.E.S."/>
        </authorList>
    </citation>
    <scope>NUCLEOTIDE SEQUENCE [MRNA]</scope>
    <scope>FUNCTION</scope>
</reference>
<reference key="4">
    <citation type="journal article" date="1996" name="FEBS Lett.">
        <authorList>
            <person name="Chhajlani V."/>
            <person name="Wikberg J.E.S."/>
        </authorList>
    </citation>
    <scope>ERRATUM OF PUBMED:1516719</scope>
</reference>
<reference key="5">
    <citation type="journal article" date="1999" name="Genetics">
        <title>High polymorphism at the human melanocortin 1 receptor locus.</title>
        <authorList>
            <person name="Rana B.K."/>
            <person name="Hewett-Emmett D."/>
            <person name="Jin L."/>
            <person name="Chang B.H."/>
            <person name="Sambuughin N."/>
            <person name="Lin M."/>
            <person name="Watkins S."/>
            <person name="Bamshad M."/>
            <person name="Jorde L.B."/>
            <person name="Ramsay M."/>
            <person name="Jenkins T."/>
            <person name="Li W.H."/>
        </authorList>
    </citation>
    <scope>NUCLEOTIDE SEQUENCE [GENOMIC DNA]</scope>
    <scope>VARIANTS GLN-67; GLU-84; MET-92; CYS-151 AND GLN-163</scope>
</reference>
<reference key="6">
    <citation type="journal article" date="2001" name="J. Invest. Dermatol.">
        <title>The Pro162 variant is a loss-of-function mutation of the human melanocortin 1 receptor gene.</title>
        <authorList>
            <person name="Jimenez-Cervantes C."/>
            <person name="Olivares C."/>
            <person name="Gonzalez P."/>
            <person name="Morandini R."/>
            <person name="Ghanem G."/>
            <person name="Garcia-Borron J.C."/>
        </authorList>
    </citation>
    <scope>NUCLEOTIDE SEQUENCE [GENOMIC DNA]</scope>
    <scope>FUNCTION</scope>
    <scope>VARIANT PRO-162</scope>
</reference>
<reference key="7">
    <citation type="journal article" date="2001" name="Gene">
        <title>The human melanocortin-1 receptor locus: analysis of transcription unit, locus polymorphism and haplotype evolution.</title>
        <authorList>
            <person name="Smith A.G."/>
            <person name="Box N.F."/>
            <person name="Marks L.H."/>
            <person name="Chen W."/>
            <person name="Smit D.J."/>
            <person name="Wyeth J.R."/>
            <person name="Huttley G.A."/>
            <person name="Easteal S."/>
            <person name="Sturm R.A."/>
        </authorList>
    </citation>
    <scope>NUCLEOTIDE SEQUENCE [GENOMIC DNA]</scope>
</reference>
<reference key="8">
    <citation type="journal article" date="2001" name="FEBS Lett.">
        <title>Thr40 and Met122 are new partial loss-of-function natural mutations of the human melanocortin 1 receptor.</title>
        <authorList>
            <person name="Jimenez-Cervantes C."/>
            <person name="Germer S."/>
            <person name="Gonzalez P."/>
            <person name="Sanchez J."/>
            <person name="Sanchez C.O."/>
            <person name="Garcia-Borron J.C."/>
        </authorList>
    </citation>
    <scope>NUCLEOTIDE SEQUENCE [GENOMIC DNA]</scope>
    <scope>FUNCTION</scope>
    <scope>VARIANTS THR-40 AND MET-122</scope>
</reference>
<reference key="9">
    <citation type="journal article" date="2006" name="Hum. Genet.">
        <title>Identification of novel functional variants of the melanocortin 1 receptor gene originated from Asians.</title>
        <authorList>
            <person name="Nakayama K."/>
            <person name="Soemantri A."/>
            <person name="Jin F."/>
            <person name="Dashnyam B."/>
            <person name="Ohtsuka R."/>
            <person name="Duanchang P."/>
            <person name="Isa M.N."/>
            <person name="Settheetham-Ishida W."/>
            <person name="Harihara S."/>
            <person name="Ishida T."/>
        </authorList>
    </citation>
    <scope>NUCLEOTIDE SEQUENCE [GENOMIC DNA]</scope>
    <scope>FUNCTION</scope>
    <scope>VARIANTS GLN-67; MET-92; THR-120; PHE-147 DEL; CYS-151; ILE-157; THR-159; GLN-163 AND GLY-166</scope>
    <scope>CHARACTERIZATION OF VARIANTS GLN-67; MET-92; THR-120; PHE-147 DEL; CYS-151; ILE-157; THR-159; GLN-163 AND GLY-166</scope>
</reference>
<reference key="10">
    <citation type="submission" date="2003-08" db="EMBL/GenBank/DDBJ databases">
        <authorList>
            <person name="Pastorino L."/>
            <person name="Cusano R."/>
            <person name="Lantieri F."/>
            <person name="Origone P."/>
            <person name="Bruno W."/>
            <person name="Barile M."/>
            <person name="Gliori S."/>
            <person name="Sturm R.A."/>
            <person name="Bianchi Scarra' G."/>
        </authorList>
    </citation>
    <scope>NUCLEOTIDE SEQUENCE [GENOMIC DNA]</scope>
</reference>
<reference key="11">
    <citation type="submission" date="2003-01" db="EMBL/GenBank/DDBJ databases">
        <title>cDNA clones of human proteins involved in signal transduction sequenced by the Guthrie cDNA resource center (www.cdna.org).</title>
        <authorList>
            <person name="Kopatz S.A."/>
            <person name="Aronstam R.S."/>
            <person name="Sharma S.V."/>
        </authorList>
    </citation>
    <scope>NUCLEOTIDE SEQUENCE [LARGE SCALE MRNA]</scope>
</reference>
<reference key="12">
    <citation type="submission" date="2002-05" db="EMBL/GenBank/DDBJ databases">
        <authorList>
            <consortium name="SeattleSNPs variation discovery resource"/>
        </authorList>
    </citation>
    <scope>NUCLEOTIDE SEQUENCE [GENOMIC DNA]</scope>
    <scope>VARIANTS LEU-60; MET-92; CYS-151; THR-155; LEU-156; TRP-160; GLN-163 AND LEU-196</scope>
</reference>
<reference key="13">
    <citation type="journal article" date="2004" name="Genome Res.">
        <title>The status, quality, and expansion of the NIH full-length cDNA project: the Mammalian Gene Collection (MGC).</title>
        <authorList>
            <consortium name="The MGC Project Team"/>
        </authorList>
    </citation>
    <scope>NUCLEOTIDE SEQUENCE [LARGE SCALE MRNA]</scope>
    <scope>VARIANT THR-155</scope>
    <source>
        <tissue>Skin</tissue>
    </source>
</reference>
<reference key="14">
    <citation type="journal article" date="2003" name="Proc. Natl. Acad. Sci. U.S.A.">
        <title>The melanocortin-1 receptor gene mediates female-specific mechanisms of analgesia in mice and humans.</title>
        <authorList>
            <person name="Mogil J.S."/>
            <person name="Wilson S.G."/>
            <person name="Chesler E.J."/>
            <person name="Rankin A.L."/>
            <person name="Nemmani K.V."/>
            <person name="Lariviere W.R."/>
            <person name="Groce M.K."/>
            <person name="Wallace M.R."/>
            <person name="Kaplan L."/>
            <person name="Staud R."/>
            <person name="Ness T.J."/>
            <person name="Glover T.L."/>
            <person name="Stankova M."/>
            <person name="Mayorov A."/>
            <person name="Hruby V.J."/>
            <person name="Grisel J.E."/>
            <person name="Fillingim R.B."/>
        </authorList>
    </citation>
    <scope>ASSOCIATION WITH FEMALE-SPECIFIC ANALGESIA FROM KAPPA-OPIOID RECEPTOR</scope>
</reference>
<reference key="15">
    <citation type="journal article" date="2009" name="J. Biol. Chem.">
        <title>Mahogunin ring finger-1 (MGRN1) E3 ubiquitin ligase inhibits signaling from melanocortin receptor by competition with Galphas.</title>
        <authorList>
            <person name="Perez-Oliva A.B."/>
            <person name="Olivares C."/>
            <person name="Jimenez-Cervantes C."/>
            <person name="Garcia-Borron J.C."/>
        </authorList>
    </citation>
    <scope>FUNCTION</scope>
    <scope>INTERACTION WITH MGRN1</scope>
    <scope>MUTAGENESIS OF LYS-65; LYS-226; LYS-238 AND LYS-310</scope>
</reference>
<reference key="16">
    <citation type="journal article" date="2019" name="Proc. Natl. Acad. Sci. U.S.A.">
        <title>Human nonvisual opsin 3 regulates pigmentation of epidermal melanocytes through functional interaction with melanocortin 1 receptor.</title>
        <authorList>
            <person name="Ozdeslik R.N."/>
            <person name="Olinski L.E."/>
            <person name="Trieu M.M."/>
            <person name="Oprian D.D."/>
            <person name="Oancea E."/>
        </authorList>
    </citation>
    <scope>FUNCTION</scope>
    <scope>INTERACTION WITH OPN3</scope>
    <scope>SUBCELLULAR LOCATION</scope>
    <scope>TISSUE SPECIFICITY</scope>
</reference>
<reference key="17">
    <citation type="journal article" date="1997" name="J. Mol. Graph. Model.">
        <title>Modeling of the three-dimensional structure of the human melanocortin 1 receptor, using an automated method and docking of a rigid cyclic melanocyte-stimulating hormone core peptide.</title>
        <authorList>
            <person name="Prusis P."/>
            <person name="Schioth H.B."/>
            <person name="Muceniece R."/>
            <person name="Herzyk P."/>
            <person name="Afshar M."/>
            <person name="Hubbard R.E."/>
            <person name="Wikberg J.E."/>
        </authorList>
    </citation>
    <scope>3D-STRUCTURE MODELING</scope>
</reference>
<reference key="18">
    <citation type="journal article" date="1995" name="Nat. Genet.">
        <title>Variants of the melanocyte-stimulating hormone receptor gene are associated with red hair and fair skin in humans.</title>
        <authorList>
            <person name="Valverde P."/>
            <person name="Healy F."/>
            <person name="Jackson I."/>
            <person name="Rees J.L."/>
            <person name="Thody A.J."/>
        </authorList>
    </citation>
    <scope>VARIANT HIS-294</scope>
</reference>
<reference key="19">
    <citation type="journal article" date="1996" name="Hum. Mol. Genet.">
        <title>The Asp84Glu variant of the melanocortin 1 receptor (MC1R) is associated with melanoma.</title>
        <authorList>
            <person name="Valverde P."/>
            <person name="Healy E."/>
            <person name="Sikkink S."/>
            <person name="Haldane F."/>
            <person name="Thody A.J."/>
            <person name="Carothers A."/>
            <person name="Jackson I.J."/>
            <person name="Rees J.L."/>
        </authorList>
    </citation>
    <scope>VARIANT GLU-84</scope>
</reference>
<reference key="20">
    <citation type="journal article" date="1997" name="Hum. Mol. Genet.">
        <title>Characterization of melanocyte stimulating hormone receptor variant alleles in twins with red hair.</title>
        <authorList>
            <person name="Box N.F."/>
            <person name="Wyeth J.R."/>
            <person name="O'Gorman L.E."/>
            <person name="Martin N.G."/>
            <person name="Sturm R.A."/>
        </authorList>
    </citation>
    <scope>VARIANTS LEU-60; MET-92; CYS-151; TRP-160 AND HIS-294</scope>
</reference>
<reference key="21">
    <citation type="journal article" date="1997" name="Hum. Mutat.">
        <title>Identification of common polymorphisms in the coding sequence of the human MSH receptor (MC1R) with possible biological effects.</title>
        <authorList>
            <person name="Koppula S.V."/>
            <person name="Robbins L.S."/>
            <person name="Lu D."/>
            <person name="Baack E."/>
            <person name="White C.R. Jr."/>
            <person name="Swanson N.A."/>
            <person name="Cone R.D."/>
        </authorList>
    </citation>
    <scope>VARIANTS GLU-84 AND MET-92</scope>
</reference>
<reference key="22">
    <citation type="journal article" date="1998" name="Biochem. Biophys. Res. Commun.">
        <title>Human pigmentation phenotype: a point mutation generates nonfunctional MSH receptor.</title>
        <authorList>
            <person name="Fraendberg P.-A."/>
            <person name="Doufexis M."/>
            <person name="Kapas S."/>
            <person name="Chhajlani V."/>
        </authorList>
    </citation>
    <scope>VARIANT CYS-151</scope>
</reference>
<reference key="23">
    <citation type="journal article" date="1998" name="J. Invest. Dermatol.">
        <title>Melanocortin 1 receptor variants in an Irish population.</title>
        <authorList>
            <person name="Smith R."/>
            <person name="Healy E."/>
            <person name="Siddiqui S."/>
            <person name="Flanagan N."/>
            <person name="Steijlen P.M."/>
            <person name="Rosdahl I."/>
            <person name="Jacques J.P."/>
            <person name="Rogers S."/>
            <person name="Turner R."/>
            <person name="Jackson I.J."/>
            <person name="Birch-MacHin M.A."/>
            <person name="Rees J.L."/>
        </authorList>
    </citation>
    <scope>VARIANT TRP-160</scope>
</reference>
<reference key="24">
    <citation type="journal article" date="1999" name="Biochem. Biophys. Res. Commun.">
        <title>Loss of function mutations of the human melanocortin 1 receptor are common and are associated with red hair.</title>
        <authorList>
            <person name="Schioeth H.B."/>
            <person name="Phillips S.R."/>
            <person name="Rudzish R."/>
            <person name="Birch-Machin M.A."/>
            <person name="Wikberg J.E.S."/>
            <person name="Rees J.L."/>
        </authorList>
    </citation>
    <scope>CHARACTERIZATION OF VARIANTS LEU-60; HIS-142; CYS-151; TRP-160 AND HIS-294</scope>
</reference>
<reference key="25">
    <citation type="journal article" date="2002" name="Eur. J. Biochem.">
        <title>Loss-of-function variants of the human melanocortin-1 receptor gene in melanoma cells define structural determinants of receptor function.</title>
        <authorList>
            <person name="Sanchez Mas J."/>
            <person name="Olivares Sanchez C."/>
            <person name="Ghanem G."/>
            <person name="Haycock J."/>
            <person name="Lozano Teruel J.A."/>
            <person name="Garcia-Borron J.C."/>
            <person name="Jimenez-Cervantes C."/>
        </authorList>
    </citation>
    <scope>VARIANTS ARG-93; HIS-142 AND CYS-151</scope>
    <scope>CHARACTERIZATION OF VARIANTS ARG-93 AND CYS-151</scope>
</reference>
<reference key="26">
    <citation type="journal article" date="2005" name="Hum. Mol. Genet.">
        <title>Altered cell surface expression of human MC1R variant receptor alleles associated with red hair and skin cancer risk.</title>
        <authorList>
            <person name="Beaumont K.A."/>
            <person name="Newton R.A."/>
            <person name="Smit D.J."/>
            <person name="Leonard J.H."/>
            <person name="Stow J.L."/>
            <person name="Sturm R.A."/>
        </authorList>
    </citation>
    <scope>CHARACTERIZATION OF VARIANTS GLU-84; CYS-151; THR-155 AND TRP-160</scope>
</reference>
<reference key="27">
    <citation type="journal article" date="2007" name="Carcinogenesis">
        <title>MC1R: three novel variants identified in a malignant melanoma association study in the Spanish population.</title>
        <authorList>
            <person name="Fernandez L."/>
            <person name="Milne R."/>
            <person name="Bravo J."/>
            <person name="Lopez J."/>
            <person name="Aviles J."/>
            <person name="Longo M."/>
            <person name="Benitez J."/>
            <person name="Lazaro P."/>
            <person name="Ribas G."/>
        </authorList>
    </citation>
    <scope>VARIANTS CMM5 PHE-41 AND THR-128</scope>
    <scope>VARIANTS LEU-60; MET-92; THR-155; TRP-160; GLN-163; SER-281 AND HIS-294</scope>
</reference>
<reference key="28">
    <citation type="journal article" date="2007" name="Nat. Genet.">
        <title>Genetic determinants of hair, eye and skin pigmentation in Europeans.</title>
        <authorList>
            <person name="Sulem P."/>
            <person name="Gudbjartsson D.F."/>
            <person name="Stacey S.N."/>
            <person name="Helgason A."/>
            <person name="Rafnar T."/>
            <person name="Magnusson K.P."/>
            <person name="Manolescu A."/>
            <person name="Karason A."/>
            <person name="Palsson A."/>
            <person name="Thorleifsson G."/>
            <person name="Jakobsdottir M."/>
            <person name="Steinberg S."/>
            <person name="Palsson S."/>
            <person name="Jonasson F."/>
            <person name="Sigurgeirsson B."/>
            <person name="Thorisdottir K."/>
            <person name="Ragnarsson R."/>
            <person name="Benediktsdottir K.R."/>
            <person name="Aben K.K."/>
            <person name="Kiemeney L.A."/>
            <person name="Olafsson J.H."/>
            <person name="Gulcher J."/>
            <person name="Kong A."/>
            <person name="Thorsteinsdottir U."/>
            <person name="Stefansson K."/>
        </authorList>
    </citation>
    <scope>VARIANT CYS-151</scope>
    <scope>ASSOCIATION WITH SHEP2</scope>
</reference>
<reference key="29">
    <citation type="journal article" date="2008" name="Nature">
        <title>DNA sequencing of a cytogenetically normal acute myeloid leukaemia genome.</title>
        <authorList>
            <person name="Ley T.J."/>
            <person name="Mardis E.R."/>
            <person name="Ding L."/>
            <person name="Fulton B."/>
            <person name="McLellan M.D."/>
            <person name="Chen K."/>
            <person name="Dooling D."/>
            <person name="Dunford-Shore B.H."/>
            <person name="McGrath S."/>
            <person name="Hickenbotham M."/>
            <person name="Cook L."/>
            <person name="Abbott R."/>
            <person name="Larson D.E."/>
            <person name="Koboldt D.C."/>
            <person name="Pohl C."/>
            <person name="Smith S."/>
            <person name="Hawkins A."/>
            <person name="Abbott S."/>
            <person name="Locke D."/>
            <person name="Hillier L.W."/>
            <person name="Miner T."/>
            <person name="Fulton L."/>
            <person name="Magrini V."/>
            <person name="Wylie T."/>
            <person name="Glasscock J."/>
            <person name="Conyers J."/>
            <person name="Sander N."/>
            <person name="Shi X."/>
            <person name="Osborne J.R."/>
            <person name="Minx P."/>
            <person name="Gordon D."/>
            <person name="Chinwalla A."/>
            <person name="Zhao Y."/>
            <person name="Ries R.E."/>
            <person name="Payton J.E."/>
            <person name="Westervelt P."/>
            <person name="Tomasson M.H."/>
            <person name="Watson M."/>
            <person name="Baty J."/>
            <person name="Ivanovich J."/>
            <person name="Heath S."/>
            <person name="Shannon W.D."/>
            <person name="Nagarajan R."/>
            <person name="Walter M.J."/>
            <person name="Link D.C."/>
            <person name="Graubert T.A."/>
            <person name="DiPersio J.F."/>
            <person name="Wilson R.K."/>
        </authorList>
    </citation>
    <scope>VARIANTS [LARGE SCALE ANALYSIS] LEU-60 AND MET-92</scope>
</reference>
<reference key="30">
    <citation type="journal article" date="2009" name="Hum. Mutat.">
        <title>Identification and functional analysis of novel variants of the human melanocortin 1 receptor found in melanoma patients.</title>
        <authorList>
            <person name="Perez Oliva A.B."/>
            <person name="Fernendez L.P."/>
            <person name="DeTorre C."/>
            <person name="Herraiz C."/>
            <person name="Martinez-Escribano J.A."/>
            <person name="Benitez J."/>
            <person name="Lozano Teruel J.A."/>
            <person name="Garcia-Borron J.C."/>
            <person name="Jimenez-Cervantes C."/>
            <person name="Ribas G."/>
        </authorList>
    </citation>
    <scope>VARIANTS CMM5 MET-38; ALA-51 AND ARG-289</scope>
    <scope>CHARACTERIZATION OF VARIANTS CMM5 MET-38; PHE-41; ALA-51; THR-128 AND ARG-289</scope>
    <scope>CHARACTERIZATION OF VARIANT SER-281</scope>
</reference>
<reference key="31">
    <citation type="journal article" date="2017" name="Clin. Immunol.">
        <title>Genetic modifiers of multiple sclerosis progression, severity and onset.</title>
        <authorList>
            <person name="Sadovnick A.D."/>
            <person name="Traboulsee A.L."/>
            <person name="Zhao Y."/>
            <person name="Bernales C.Q."/>
            <person name="Encarnacion M."/>
            <person name="Ross J.P."/>
            <person name="Yee I.M."/>
            <person name="Criscuoli M.G."/>
            <person name="Vilarino-Gueell C."/>
        </authorList>
    </citation>
    <scope>VARIANT TRP-160</scope>
</reference>
<proteinExistence type="evidence at protein level"/>
<keyword id="KW-0002">3D-structure</keyword>
<keyword id="KW-1003">Cell membrane</keyword>
<keyword id="KW-0225">Disease variant</keyword>
<keyword id="KW-0297">G-protein coupled receptor</keyword>
<keyword id="KW-0325">Glycoprotein</keyword>
<keyword id="KW-0449">Lipoprotein</keyword>
<keyword id="KW-0472">Membrane</keyword>
<keyword id="KW-0564">Palmitate</keyword>
<keyword id="KW-1267">Proteomics identification</keyword>
<keyword id="KW-0675">Receptor</keyword>
<keyword id="KW-1185">Reference proteome</keyword>
<keyword id="KW-0807">Transducer</keyword>
<keyword id="KW-0812">Transmembrane</keyword>
<keyword id="KW-1133">Transmembrane helix</keyword>
<gene>
    <name type="primary">MC1R</name>
    <name type="synonym">MSHR</name>
</gene>
<comment type="function">
    <text evidence="5 6 9 10 13 18 19 21">Receptor for MSH (alpha, beta and gamma) and ACTH (PubMed:11442765, PubMed:11707265, PubMed:1325670, PubMed:1516719, PubMed:8463333). The activity of this receptor is mediated by G proteins which activate adenylate cyclase (PubMed:11707265, PubMed:1325670, PubMed:16463023, PubMed:19737927). Mediates melanogenesis, the production of eumelanin (black/brown) and phaeomelanin (red/yellow), via regulation of cAMP signaling in melanocytes (PubMed:31097585).</text>
</comment>
<comment type="subunit">
    <text evidence="18 19">Interacts with MGRN1, but does not undergo MGRN1-mediated ubiquitination; this interaction competes with GNAS-binding and thus inhibits agonist-induced cAMP production (PubMed:19737927). Interacts with OPN3; the interaction results in a decrease in MC1R-mediated cAMP signaling and ultimately a decrease in melanin production in melanocytes (PubMed:31097585).</text>
</comment>
<comment type="interaction">
    <interactant intactId="EBI-9538513">
        <id>Q01726</id>
    </interactant>
    <interactant intactId="EBI-9538727">
        <id>Q8TCY5</id>
        <label>MRAP</label>
    </interactant>
    <organismsDiffer>false</organismsDiffer>
    <experiments>2</experiments>
</comment>
<comment type="interaction">
    <interactant intactId="EBI-9538513">
        <id>Q01726</id>
    </interactant>
    <interactant intactId="EBI-21871627">
        <id>Q9H1Y3</id>
        <label>OPN3</label>
    </interactant>
    <organismsDiffer>false</organismsDiffer>
    <experiments>5</experiments>
</comment>
<comment type="subcellular location">
    <subcellularLocation>
        <location evidence="19">Cell membrane</location>
        <topology evidence="1">Multi-pass membrane protein</topology>
    </subcellularLocation>
</comment>
<comment type="tissue specificity">
    <text evidence="9 19">Expressed in melanocytes (PubMed:1325670, PubMed:31097585). Expressed in corticoadrenal tissue (PubMed:1325670).</text>
</comment>
<comment type="polymorphism">
    <text>Genetic variants in MC1R define the skin/hair/eye pigmentation variation locus 2 (SHEP2) [MIM:266300]. Hair, eye and skin pigmentation are among the most visible examples of human phenotypic variation, with a broad normal range that is subject to substantial geographic stratification. In the case of skin, individuals tend to have lighter pigmentation with increasing distance from the equator, with type I skin being the most lightly pigmented and type IV the most dark pigmented. By contrast, the majority of variation in human eye and hair color is found among individuals of European ancestry, with most other human populations fixed for brown eyes and black hair. Partial loss-of-function mutations are associated with fair skin, poor tanning and increased skin cancer risk.</text>
</comment>
<comment type="polymorphism">
    <text evidence="8">MC1R variants associated with red hair and fair skin, determine female-specific increased analgesia from kappa-opioid receptor agonist [MIM:613098].</text>
</comment>
<comment type="disease" evidence="14 17">
    <disease id="DI-02516">
        <name>Melanoma, cutaneous malignant 5</name>
        <acronym>CMM5</acronym>
        <description>A malignant neoplasm of melanocytes, arising de novo or from a pre-existing benign nevus, which occurs most often in the skin but may also involve other sites.</description>
        <dbReference type="MIM" id="613099"/>
    </disease>
    <text>Disease susceptibility is associated with variants affecting the gene represented in this entry.</text>
</comment>
<comment type="similarity">
    <text evidence="2">Belongs to the G-protein coupled receptor 1 family.</text>
</comment>